<keyword id="KW-1277">Toxin-antitoxin system</keyword>
<accession>A5F376</accession>
<accession>C3LYL3</accession>
<accession>P52122</accession>
<accession>Q9KTQ2</accession>
<gene>
    <name type="primary">ratA</name>
    <name type="ordered locus">VC0395_A0375</name>
    <name type="ordered locus">VC395_0865</name>
</gene>
<name>RATA_VIBC3</name>
<dbReference type="EMBL" id="U39068">
    <property type="protein sequence ID" value="AAA82716.1"/>
    <property type="molecule type" value="Genomic_DNA"/>
</dbReference>
<dbReference type="EMBL" id="CP000627">
    <property type="protein sequence ID" value="ABQ21297.1"/>
    <property type="status" value="ALT_INIT"/>
    <property type="molecule type" value="Genomic_DNA"/>
</dbReference>
<dbReference type="EMBL" id="CP001235">
    <property type="protein sequence ID" value="ACP08879.1"/>
    <property type="status" value="ALT_INIT"/>
    <property type="molecule type" value="Genomic_DNA"/>
</dbReference>
<dbReference type="RefSeq" id="WP_000815876.1">
    <property type="nucleotide sequence ID" value="NZ_JAACZH010000023.1"/>
</dbReference>
<dbReference type="SMR" id="A5F376"/>
<dbReference type="KEGG" id="vco:VC0395_A0375"/>
<dbReference type="KEGG" id="vcr:VC395_0865"/>
<dbReference type="PATRIC" id="fig|345073.21.peg.837"/>
<dbReference type="eggNOG" id="COG2867">
    <property type="taxonomic scope" value="Bacteria"/>
</dbReference>
<dbReference type="HOGENOM" id="CLU_079653_3_1_6"/>
<dbReference type="OrthoDB" id="9804759at2"/>
<dbReference type="Proteomes" id="UP000000249">
    <property type="component" value="Chromosome 2"/>
</dbReference>
<dbReference type="GO" id="GO:0048039">
    <property type="term" value="F:ubiquinone binding"/>
    <property type="evidence" value="ECO:0007669"/>
    <property type="project" value="InterPro"/>
</dbReference>
<dbReference type="GO" id="GO:0045333">
    <property type="term" value="P:cellular respiration"/>
    <property type="evidence" value="ECO:0007669"/>
    <property type="project" value="InterPro"/>
</dbReference>
<dbReference type="CDD" id="cd07813">
    <property type="entry name" value="COQ10p_like"/>
    <property type="match status" value="1"/>
</dbReference>
<dbReference type="FunFam" id="3.30.530.20:FF:000005">
    <property type="entry name" value="Type II toxin-antitoxin system toxin RatA"/>
    <property type="match status" value="1"/>
</dbReference>
<dbReference type="Gene3D" id="3.30.530.20">
    <property type="match status" value="1"/>
</dbReference>
<dbReference type="InterPro" id="IPR044996">
    <property type="entry name" value="COQ10-like"/>
</dbReference>
<dbReference type="InterPro" id="IPR005031">
    <property type="entry name" value="COQ10_START"/>
</dbReference>
<dbReference type="InterPro" id="IPR023393">
    <property type="entry name" value="START-like_dom_sf"/>
</dbReference>
<dbReference type="PANTHER" id="PTHR12901:SF10">
    <property type="entry name" value="COENZYME Q-BINDING PROTEIN COQ10, MITOCHONDRIAL"/>
    <property type="match status" value="1"/>
</dbReference>
<dbReference type="PANTHER" id="PTHR12901">
    <property type="entry name" value="SPERM PROTEIN HOMOLOG"/>
    <property type="match status" value="1"/>
</dbReference>
<dbReference type="Pfam" id="PF03364">
    <property type="entry name" value="Polyketide_cyc"/>
    <property type="match status" value="1"/>
</dbReference>
<dbReference type="SUPFAM" id="SSF55961">
    <property type="entry name" value="Bet v1-like"/>
    <property type="match status" value="1"/>
</dbReference>
<comment type="function">
    <text evidence="1">Toxic component of a type II toxin-antitoxin (TA) system. Binds to 50S ribosomal subunits, preventing them from associating with 30S subunits to form 70S ribosomes. Its antitoxin is unknown (By similarity).</text>
</comment>
<comment type="similarity">
    <text evidence="2">Belongs to the ribosome association toxin RatA family.</text>
</comment>
<comment type="sequence caution" evidence="2">
    <conflict type="erroneous initiation">
        <sequence resource="EMBL-CDS" id="ABQ21297"/>
    </conflict>
    <text>Extended N-terminus.</text>
</comment>
<comment type="sequence caution" evidence="2">
    <conflict type="erroneous initiation">
        <sequence resource="EMBL-CDS" id="ACP08879"/>
    </conflict>
    <text>Extended N-terminus.</text>
</comment>
<sequence>MKQVSRSALVSFSAEQMFHLVNDVARYPEFLPGCSGSCVLEQSEAHMVASVDVSKAGISKTFTTSNQLTPGVSIAMSLVDGPFKTLRGGWFFTPLDEAACKVELRLEFEFSSKMIELAFGKIFNELTSNMVNAFTRRAKQVYGE</sequence>
<organism>
    <name type="scientific">Vibrio cholerae serotype O1 (strain ATCC 39541 / Classical Ogawa 395 / O395)</name>
    <dbReference type="NCBI Taxonomy" id="345073"/>
    <lineage>
        <taxon>Bacteria</taxon>
        <taxon>Pseudomonadati</taxon>
        <taxon>Pseudomonadota</taxon>
        <taxon>Gammaproteobacteria</taxon>
        <taxon>Vibrionales</taxon>
        <taxon>Vibrionaceae</taxon>
        <taxon>Vibrio</taxon>
    </lineage>
</organism>
<proteinExistence type="inferred from homology"/>
<protein>
    <recommendedName>
        <fullName>Ribosome association toxin RatA</fullName>
    </recommendedName>
</protein>
<evidence type="ECO:0000250" key="1"/>
<evidence type="ECO:0000305" key="2"/>
<feature type="chain" id="PRO_0000324780" description="Ribosome association toxin RatA">
    <location>
        <begin position="1"/>
        <end position="144"/>
    </location>
</feature>
<reference key="1">
    <citation type="submission" date="1995-10" db="EMBL/GenBank/DDBJ databases">
        <authorList>
            <person name="Kovach M.E."/>
            <person name="Hughes K.J."/>
            <person name="Harkey C.W."/>
            <person name="Everiss K.D."/>
            <person name="Shaffer M.D."/>
            <person name="Peterson K.M."/>
        </authorList>
    </citation>
    <scope>NUCLEOTIDE SEQUENCE [GENOMIC DNA]</scope>
</reference>
<reference key="2">
    <citation type="submission" date="2007-03" db="EMBL/GenBank/DDBJ databases">
        <authorList>
            <person name="Heidelberg J."/>
        </authorList>
    </citation>
    <scope>NUCLEOTIDE SEQUENCE [LARGE SCALE GENOMIC DNA]</scope>
    <source>
        <strain>ATCC 39541 / Classical Ogawa 395 / O395</strain>
    </source>
</reference>
<reference key="3">
    <citation type="journal article" date="2008" name="PLoS ONE">
        <title>A recalibrated molecular clock and independent origins for the cholera pandemic clones.</title>
        <authorList>
            <person name="Feng L."/>
            <person name="Reeves P.R."/>
            <person name="Lan R."/>
            <person name="Ren Y."/>
            <person name="Gao C."/>
            <person name="Zhou Z."/>
            <person name="Ren Y."/>
            <person name="Cheng J."/>
            <person name="Wang W."/>
            <person name="Wang J."/>
            <person name="Qian W."/>
            <person name="Li D."/>
            <person name="Wang L."/>
        </authorList>
    </citation>
    <scope>NUCLEOTIDE SEQUENCE [LARGE SCALE GENOMIC DNA]</scope>
    <source>
        <strain>ATCC 39541 / Classical Ogawa 395 / O395</strain>
    </source>
</reference>